<accession>Q0ID08</accession>
<organism>
    <name type="scientific">Synechococcus sp. (strain CC9311)</name>
    <dbReference type="NCBI Taxonomy" id="64471"/>
    <lineage>
        <taxon>Bacteria</taxon>
        <taxon>Bacillati</taxon>
        <taxon>Cyanobacteriota</taxon>
        <taxon>Cyanophyceae</taxon>
        <taxon>Synechococcales</taxon>
        <taxon>Synechococcaceae</taxon>
        <taxon>Synechococcus</taxon>
    </lineage>
</organism>
<protein>
    <recommendedName>
        <fullName evidence="1">Large ribosomal subunit protein uL2</fullName>
    </recommendedName>
    <alternativeName>
        <fullName evidence="3">50S ribosomal protein L2</fullName>
    </alternativeName>
</protein>
<gene>
    <name evidence="1" type="primary">rplB</name>
    <name evidence="1" type="synonym">rpl2</name>
    <name type="ordered locus">sync_0434</name>
</gene>
<proteinExistence type="inferred from homology"/>
<comment type="function">
    <text evidence="1">One of the primary rRNA binding proteins. Required for association of the 30S and 50S subunits to form the 70S ribosome, for tRNA binding and peptide bond formation. It has been suggested to have peptidyltransferase activity; this is somewhat controversial. Makes several contacts with the 16S rRNA in the 70S ribosome.</text>
</comment>
<comment type="subunit">
    <text evidence="1">Part of the 50S ribosomal subunit. Forms a bridge to the 30S subunit in the 70S ribosome.</text>
</comment>
<comment type="similarity">
    <text evidence="1">Belongs to the universal ribosomal protein uL2 family.</text>
</comment>
<evidence type="ECO:0000255" key="1">
    <source>
        <dbReference type="HAMAP-Rule" id="MF_01320"/>
    </source>
</evidence>
<evidence type="ECO:0000256" key="2">
    <source>
        <dbReference type="SAM" id="MobiDB-lite"/>
    </source>
</evidence>
<evidence type="ECO:0000305" key="3"/>
<feature type="chain" id="PRO_0000310031" description="Large ribosomal subunit protein uL2">
    <location>
        <begin position="1"/>
        <end position="287"/>
    </location>
</feature>
<feature type="region of interest" description="Disordered" evidence="2">
    <location>
        <begin position="221"/>
        <end position="287"/>
    </location>
</feature>
<feature type="compositionally biased region" description="Basic residues" evidence="2">
    <location>
        <begin position="258"/>
        <end position="287"/>
    </location>
</feature>
<keyword id="KW-1185">Reference proteome</keyword>
<keyword id="KW-0687">Ribonucleoprotein</keyword>
<keyword id="KW-0689">Ribosomal protein</keyword>
<keyword id="KW-0694">RNA-binding</keyword>
<keyword id="KW-0699">rRNA-binding</keyword>
<name>RL2_SYNS3</name>
<dbReference type="EMBL" id="CP000435">
    <property type="protein sequence ID" value="ABI45224.1"/>
    <property type="molecule type" value="Genomic_DNA"/>
</dbReference>
<dbReference type="RefSeq" id="WP_011618396.1">
    <property type="nucleotide sequence ID" value="NC_008319.1"/>
</dbReference>
<dbReference type="SMR" id="Q0ID08"/>
<dbReference type="STRING" id="64471.sync_0434"/>
<dbReference type="KEGG" id="syg:sync_0434"/>
<dbReference type="eggNOG" id="COG0090">
    <property type="taxonomic scope" value="Bacteria"/>
</dbReference>
<dbReference type="HOGENOM" id="CLU_036235_2_1_3"/>
<dbReference type="OrthoDB" id="9778722at2"/>
<dbReference type="Proteomes" id="UP000001961">
    <property type="component" value="Chromosome"/>
</dbReference>
<dbReference type="GO" id="GO:0015934">
    <property type="term" value="C:large ribosomal subunit"/>
    <property type="evidence" value="ECO:0007669"/>
    <property type="project" value="InterPro"/>
</dbReference>
<dbReference type="GO" id="GO:0019843">
    <property type="term" value="F:rRNA binding"/>
    <property type="evidence" value="ECO:0007669"/>
    <property type="project" value="UniProtKB-UniRule"/>
</dbReference>
<dbReference type="GO" id="GO:0003735">
    <property type="term" value="F:structural constituent of ribosome"/>
    <property type="evidence" value="ECO:0007669"/>
    <property type="project" value="InterPro"/>
</dbReference>
<dbReference type="GO" id="GO:0016740">
    <property type="term" value="F:transferase activity"/>
    <property type="evidence" value="ECO:0007669"/>
    <property type="project" value="InterPro"/>
</dbReference>
<dbReference type="GO" id="GO:0006412">
    <property type="term" value="P:translation"/>
    <property type="evidence" value="ECO:0007669"/>
    <property type="project" value="UniProtKB-UniRule"/>
</dbReference>
<dbReference type="FunFam" id="2.30.30.30:FF:000001">
    <property type="entry name" value="50S ribosomal protein L2"/>
    <property type="match status" value="1"/>
</dbReference>
<dbReference type="FunFam" id="2.40.50.140:FF:000003">
    <property type="entry name" value="50S ribosomal protein L2"/>
    <property type="match status" value="1"/>
</dbReference>
<dbReference type="FunFam" id="4.10.950.10:FF:000001">
    <property type="entry name" value="50S ribosomal protein L2"/>
    <property type="match status" value="1"/>
</dbReference>
<dbReference type="Gene3D" id="2.30.30.30">
    <property type="match status" value="1"/>
</dbReference>
<dbReference type="Gene3D" id="2.40.50.140">
    <property type="entry name" value="Nucleic acid-binding proteins"/>
    <property type="match status" value="1"/>
</dbReference>
<dbReference type="Gene3D" id="4.10.950.10">
    <property type="entry name" value="Ribosomal protein L2, domain 3"/>
    <property type="match status" value="1"/>
</dbReference>
<dbReference type="HAMAP" id="MF_01320_B">
    <property type="entry name" value="Ribosomal_uL2_B"/>
    <property type="match status" value="1"/>
</dbReference>
<dbReference type="InterPro" id="IPR012340">
    <property type="entry name" value="NA-bd_OB-fold"/>
</dbReference>
<dbReference type="InterPro" id="IPR014722">
    <property type="entry name" value="Rib_uL2_dom2"/>
</dbReference>
<dbReference type="InterPro" id="IPR002171">
    <property type="entry name" value="Ribosomal_uL2"/>
</dbReference>
<dbReference type="InterPro" id="IPR005880">
    <property type="entry name" value="Ribosomal_uL2_bac/org-type"/>
</dbReference>
<dbReference type="InterPro" id="IPR022669">
    <property type="entry name" value="Ribosomal_uL2_C"/>
</dbReference>
<dbReference type="InterPro" id="IPR022671">
    <property type="entry name" value="Ribosomal_uL2_CS"/>
</dbReference>
<dbReference type="InterPro" id="IPR014726">
    <property type="entry name" value="Ribosomal_uL2_dom3"/>
</dbReference>
<dbReference type="InterPro" id="IPR022666">
    <property type="entry name" value="Ribosomal_uL2_RNA-bd_dom"/>
</dbReference>
<dbReference type="InterPro" id="IPR008991">
    <property type="entry name" value="Translation_prot_SH3-like_sf"/>
</dbReference>
<dbReference type="NCBIfam" id="TIGR01171">
    <property type="entry name" value="rplB_bact"/>
    <property type="match status" value="1"/>
</dbReference>
<dbReference type="PANTHER" id="PTHR13691:SF5">
    <property type="entry name" value="LARGE RIBOSOMAL SUBUNIT PROTEIN UL2M"/>
    <property type="match status" value="1"/>
</dbReference>
<dbReference type="PANTHER" id="PTHR13691">
    <property type="entry name" value="RIBOSOMAL PROTEIN L2"/>
    <property type="match status" value="1"/>
</dbReference>
<dbReference type="Pfam" id="PF00181">
    <property type="entry name" value="Ribosomal_L2"/>
    <property type="match status" value="1"/>
</dbReference>
<dbReference type="Pfam" id="PF03947">
    <property type="entry name" value="Ribosomal_L2_C"/>
    <property type="match status" value="1"/>
</dbReference>
<dbReference type="PIRSF" id="PIRSF002158">
    <property type="entry name" value="Ribosomal_L2"/>
    <property type="match status" value="1"/>
</dbReference>
<dbReference type="SMART" id="SM01383">
    <property type="entry name" value="Ribosomal_L2"/>
    <property type="match status" value="1"/>
</dbReference>
<dbReference type="SMART" id="SM01382">
    <property type="entry name" value="Ribosomal_L2_C"/>
    <property type="match status" value="1"/>
</dbReference>
<dbReference type="SUPFAM" id="SSF50249">
    <property type="entry name" value="Nucleic acid-binding proteins"/>
    <property type="match status" value="1"/>
</dbReference>
<dbReference type="SUPFAM" id="SSF50104">
    <property type="entry name" value="Translation proteins SH3-like domain"/>
    <property type="match status" value="1"/>
</dbReference>
<dbReference type="PROSITE" id="PS00467">
    <property type="entry name" value="RIBOSOMAL_L2"/>
    <property type="match status" value="1"/>
</dbReference>
<sequence>MAIRTFRPYTPGTRTRVVTDFSEVTGRKPERSLVVSKHRRKGRNNRGVITCRHRGGGHKRQYRLVDFRRNKHGVTAKVAAIHYDPHRNARLALLFYADGEKRYILAPAGISIGQTVVSGTEVPIEIGNAMPLSAIPLGSSVHCVELYAGRGGQMVRTAGASAQVMAKEGDYVALKLPSTEVRLVRRECFATLGEVGNAEIRNTSLGKAGRRRWLGRRPQVRGSVMNPCDHPHGGGEGRAPIGRSGPVTPWGKPALGLKTRKRNKPSNKFVLRKRRKTSKRSRGGRDS</sequence>
<reference key="1">
    <citation type="journal article" date="2006" name="Proc. Natl. Acad. Sci. U.S.A.">
        <title>Genome sequence of Synechococcus CC9311: insights into adaptation to a coastal environment.</title>
        <authorList>
            <person name="Palenik B."/>
            <person name="Ren Q."/>
            <person name="Dupont C.L."/>
            <person name="Myers G.S."/>
            <person name="Heidelberg J.F."/>
            <person name="Badger J.H."/>
            <person name="Madupu R."/>
            <person name="Nelson W.C."/>
            <person name="Brinkac L.M."/>
            <person name="Dodson R.J."/>
            <person name="Durkin A.S."/>
            <person name="Daugherty S.C."/>
            <person name="Sullivan S.A."/>
            <person name="Khouri H."/>
            <person name="Mohamoud Y."/>
            <person name="Halpin R."/>
            <person name="Paulsen I.T."/>
        </authorList>
    </citation>
    <scope>NUCLEOTIDE SEQUENCE [LARGE SCALE GENOMIC DNA]</scope>
    <source>
        <strain>CC9311</strain>
    </source>
</reference>